<comment type="function">
    <text evidence="1">Cytoskeletal protein that is involved in cell-shape control through regulation of the length of the long axis.</text>
</comment>
<comment type="subcellular location">
    <subcellularLocation>
        <location evidence="1">Cell inner membrane</location>
        <topology evidence="1">Single-pass type II membrane protein</topology>
    </subcellularLocation>
    <text evidence="1">Forms helical filaments along the long axis of the cell.</text>
</comment>
<comment type="domain">
    <text evidence="1">The helix-turn-helix (HTH) motif in the cytoplasmic domain of the N-terminus is involved in the formation of spirals to maintain the rigid rod shape. As this protein is anchored in the cytoplasmic membrane, the HTH motif may contribute to protein-protein interactions to form the RodZ helix, which is localized beneath the cytoplasmic membrane. The C-terminal domain may be critical for determination of the rod shape by probably interacting with enzymes required for synthesis of the peptidoglycan layer, including PBPs in the periplasm.</text>
</comment>
<comment type="similarity">
    <text evidence="1">Belongs to the RodZ family.</text>
</comment>
<name>RODZ_SALPB</name>
<evidence type="ECO:0000255" key="1">
    <source>
        <dbReference type="HAMAP-Rule" id="MF_02017"/>
    </source>
</evidence>
<evidence type="ECO:0000256" key="2">
    <source>
        <dbReference type="SAM" id="MobiDB-lite"/>
    </source>
</evidence>
<organism>
    <name type="scientific">Salmonella paratyphi B (strain ATCC BAA-1250 / SPB7)</name>
    <dbReference type="NCBI Taxonomy" id="1016998"/>
    <lineage>
        <taxon>Bacteria</taxon>
        <taxon>Pseudomonadati</taxon>
        <taxon>Pseudomonadota</taxon>
        <taxon>Gammaproteobacteria</taxon>
        <taxon>Enterobacterales</taxon>
        <taxon>Enterobacteriaceae</taxon>
        <taxon>Salmonella</taxon>
    </lineage>
</organism>
<sequence length="334" mass="35659">MNTEATHDQNEAQTTGVRLRNAREQLGLSQQAVAERLCLKVSTVRDIEEDKAPSDLASTFLRGYIRSYARLVHVPEEELLPGLEKQAPLRAAKVAPMQSFSLGKRRKKRDGWLMSFTWLVLFVVVGLTGAWWWQNHKAQQEEITTMADQSTAELNADKDSGQSVPLDTGAATSQDTTPAQTAPAPATPVDSTAATQTPAPTAAATQNTVVAPSQANVDTAATSAAPAATETPSALPTSQAGVAAPAADPNALVMNFTADCWLEVTDATGKKLFSGMQRKDGNLNLTGQAPYKLKIGAPAAVQIQYQGKPVDLSRFIRTNQVARLTLNAEPTPAQ</sequence>
<proteinExistence type="inferred from homology"/>
<keyword id="KW-0997">Cell inner membrane</keyword>
<keyword id="KW-1003">Cell membrane</keyword>
<keyword id="KW-0133">Cell shape</keyword>
<keyword id="KW-0238">DNA-binding</keyword>
<keyword id="KW-0472">Membrane</keyword>
<keyword id="KW-0735">Signal-anchor</keyword>
<keyword id="KW-0812">Transmembrane</keyword>
<keyword id="KW-1133">Transmembrane helix</keyword>
<feature type="chain" id="PRO_0000361857" description="Cytoskeleton protein RodZ">
    <location>
        <begin position="1"/>
        <end position="334"/>
    </location>
</feature>
<feature type="topological domain" description="Cytoplasmic" evidence="1">
    <location>
        <begin position="1"/>
        <end position="111"/>
    </location>
</feature>
<feature type="transmembrane region" description="Helical; Signal-anchor for type II membrane protein" evidence="1">
    <location>
        <begin position="112"/>
        <end position="132"/>
    </location>
</feature>
<feature type="topological domain" description="Periplasmic" evidence="1">
    <location>
        <begin position="133"/>
        <end position="334"/>
    </location>
</feature>
<feature type="domain" description="HTH cro/C1-type" evidence="1">
    <location>
        <begin position="19"/>
        <end position="71"/>
    </location>
</feature>
<feature type="DNA-binding region" description="H-T-H motif" evidence="1">
    <location>
        <begin position="30"/>
        <end position="49"/>
    </location>
</feature>
<feature type="region of interest" description="Disordered" evidence="2">
    <location>
        <begin position="155"/>
        <end position="241"/>
    </location>
</feature>
<feature type="compositionally biased region" description="Low complexity" evidence="2">
    <location>
        <begin position="170"/>
        <end position="211"/>
    </location>
</feature>
<feature type="compositionally biased region" description="Low complexity" evidence="2">
    <location>
        <begin position="219"/>
        <end position="241"/>
    </location>
</feature>
<reference key="1">
    <citation type="submission" date="2007-11" db="EMBL/GenBank/DDBJ databases">
        <authorList>
            <consortium name="The Salmonella enterica serovar Paratyphi B Genome Sequencing Project"/>
            <person name="McClelland M."/>
            <person name="Sanderson E.K."/>
            <person name="Porwollik S."/>
            <person name="Spieth J."/>
            <person name="Clifton W.S."/>
            <person name="Fulton R."/>
            <person name="Cordes M."/>
            <person name="Wollam A."/>
            <person name="Shah N."/>
            <person name="Pepin K."/>
            <person name="Bhonagiri V."/>
            <person name="Nash W."/>
            <person name="Johnson M."/>
            <person name="Thiruvilangam P."/>
            <person name="Wilson R."/>
        </authorList>
    </citation>
    <scope>NUCLEOTIDE SEQUENCE [LARGE SCALE GENOMIC DNA]</scope>
    <source>
        <strain>ATCC BAA-1250 / SPB7</strain>
    </source>
</reference>
<gene>
    <name evidence="1" type="primary">rodZ</name>
    <name type="ordered locus">SPAB_00416</name>
</gene>
<protein>
    <recommendedName>
        <fullName evidence="1">Cytoskeleton protein RodZ</fullName>
    </recommendedName>
</protein>
<dbReference type="EMBL" id="CP000886">
    <property type="protein sequence ID" value="ABX65850.1"/>
    <property type="molecule type" value="Genomic_DNA"/>
</dbReference>
<dbReference type="RefSeq" id="WP_001090890.1">
    <property type="nucleotide sequence ID" value="NC_010102.1"/>
</dbReference>
<dbReference type="SMR" id="A9N200"/>
<dbReference type="KEGG" id="spq:SPAB_00416"/>
<dbReference type="PATRIC" id="fig|1016998.12.peg.391"/>
<dbReference type="HOGENOM" id="CLU_047530_3_1_6"/>
<dbReference type="BioCyc" id="SENT1016998:SPAB_RS01695-MONOMER"/>
<dbReference type="Proteomes" id="UP000008556">
    <property type="component" value="Chromosome"/>
</dbReference>
<dbReference type="GO" id="GO:0005886">
    <property type="term" value="C:plasma membrane"/>
    <property type="evidence" value="ECO:0007669"/>
    <property type="project" value="UniProtKB-SubCell"/>
</dbReference>
<dbReference type="GO" id="GO:0003677">
    <property type="term" value="F:DNA binding"/>
    <property type="evidence" value="ECO:0007669"/>
    <property type="project" value="UniProtKB-KW"/>
</dbReference>
<dbReference type="GO" id="GO:0008360">
    <property type="term" value="P:regulation of cell shape"/>
    <property type="evidence" value="ECO:0007669"/>
    <property type="project" value="UniProtKB-UniRule"/>
</dbReference>
<dbReference type="CDD" id="cd00093">
    <property type="entry name" value="HTH_XRE"/>
    <property type="match status" value="1"/>
</dbReference>
<dbReference type="FunFam" id="1.10.260.40:FF:000014">
    <property type="entry name" value="Cytoskeleton protein RodZ"/>
    <property type="match status" value="1"/>
</dbReference>
<dbReference type="Gene3D" id="1.10.260.40">
    <property type="entry name" value="lambda repressor-like DNA-binding domains"/>
    <property type="match status" value="1"/>
</dbReference>
<dbReference type="HAMAP" id="MF_02017">
    <property type="entry name" value="RodZ"/>
    <property type="match status" value="1"/>
</dbReference>
<dbReference type="InterPro" id="IPR050400">
    <property type="entry name" value="Bact_Cytoskel_RodZ"/>
</dbReference>
<dbReference type="InterPro" id="IPR001387">
    <property type="entry name" value="Cro/C1-type_HTH"/>
</dbReference>
<dbReference type="InterPro" id="IPR010982">
    <property type="entry name" value="Lambda_DNA-bd_dom_sf"/>
</dbReference>
<dbReference type="InterPro" id="IPR023690">
    <property type="entry name" value="RodZ"/>
</dbReference>
<dbReference type="InterPro" id="IPR025194">
    <property type="entry name" value="RodZ-like_C"/>
</dbReference>
<dbReference type="NCBIfam" id="NF008109">
    <property type="entry name" value="PRK10856.1"/>
    <property type="match status" value="1"/>
</dbReference>
<dbReference type="PANTHER" id="PTHR34475">
    <property type="match status" value="1"/>
</dbReference>
<dbReference type="PANTHER" id="PTHR34475:SF1">
    <property type="entry name" value="CYTOSKELETON PROTEIN RODZ"/>
    <property type="match status" value="1"/>
</dbReference>
<dbReference type="Pfam" id="PF13413">
    <property type="entry name" value="HTH_25"/>
    <property type="match status" value="1"/>
</dbReference>
<dbReference type="Pfam" id="PF13464">
    <property type="entry name" value="RodZ_C"/>
    <property type="match status" value="1"/>
</dbReference>
<dbReference type="SMART" id="SM00530">
    <property type="entry name" value="HTH_XRE"/>
    <property type="match status" value="1"/>
</dbReference>
<dbReference type="SUPFAM" id="SSF47413">
    <property type="entry name" value="lambda repressor-like DNA-binding domains"/>
    <property type="match status" value="1"/>
</dbReference>
<dbReference type="PROSITE" id="PS50943">
    <property type="entry name" value="HTH_CROC1"/>
    <property type="match status" value="1"/>
</dbReference>
<accession>A9N200</accession>